<protein>
    <recommendedName>
        <fullName evidence="1">Putative carbamate hydrolase RutD</fullName>
        <ecNumber evidence="1">3.5.1.-</ecNumber>
    </recommendedName>
    <alternativeName>
        <fullName evidence="1">Aminohydrolase</fullName>
    </alternativeName>
</protein>
<proteinExistence type="inferred from homology"/>
<sequence>MKLSLSPPPYADTPVVVLISGLGGSGSYWLPQLAVLEQEYQVVCYDQRGTGNNPDTLAEDYSIAQMAAELHQALVAAGIEHYAVVGHALGALVGMQLALDYPASVTVLISVNGWLRINAHTRRCFQVRERLLYSGGAQAWVEAQPLFLYPADWMAARAPRLEAEDALALAHFQGKNNLLRRLNALKRADFSHHADRIRCPVQIICASDDLLVPSACSSELHAALPDSQKMVMPYGGHACNVTDPETFNALLLNGLASLLHHREAAL</sequence>
<dbReference type="EC" id="3.5.1.-" evidence="1"/>
<dbReference type="EMBL" id="AP010953">
    <property type="protein sequence ID" value="BAI24559.1"/>
    <property type="molecule type" value="Genomic_DNA"/>
</dbReference>
<dbReference type="RefSeq" id="WP_001341462.1">
    <property type="nucleotide sequence ID" value="NC_013361.1"/>
</dbReference>
<dbReference type="SMR" id="C8TNB9"/>
<dbReference type="ESTHER" id="ecoli-rutD">
    <property type="family name" value="RutD"/>
</dbReference>
<dbReference type="KEGG" id="eoj:ECO26_1247"/>
<dbReference type="HOGENOM" id="CLU_020336_50_1_6"/>
<dbReference type="GO" id="GO:0016811">
    <property type="term" value="F:hydrolase activity, acting on carbon-nitrogen (but not peptide) bonds, in linear amides"/>
    <property type="evidence" value="ECO:0007669"/>
    <property type="project" value="InterPro"/>
</dbReference>
<dbReference type="GO" id="GO:0019740">
    <property type="term" value="P:nitrogen utilization"/>
    <property type="evidence" value="ECO:0007669"/>
    <property type="project" value="UniProtKB-UniRule"/>
</dbReference>
<dbReference type="GO" id="GO:0006212">
    <property type="term" value="P:uracil catabolic process"/>
    <property type="evidence" value="ECO:0007669"/>
    <property type="project" value="UniProtKB-UniRule"/>
</dbReference>
<dbReference type="FunFam" id="3.40.50.1820:FF:000052">
    <property type="entry name" value="Putative aminoacrylate hydrolase RutD"/>
    <property type="match status" value="1"/>
</dbReference>
<dbReference type="Gene3D" id="3.40.50.1820">
    <property type="entry name" value="alpha/beta hydrolase"/>
    <property type="match status" value="1"/>
</dbReference>
<dbReference type="HAMAP" id="MF_00832">
    <property type="entry name" value="RutD"/>
    <property type="match status" value="1"/>
</dbReference>
<dbReference type="InterPro" id="IPR000073">
    <property type="entry name" value="AB_hydrolase_1"/>
</dbReference>
<dbReference type="InterPro" id="IPR029058">
    <property type="entry name" value="AB_hydrolase_fold"/>
</dbReference>
<dbReference type="InterPro" id="IPR050266">
    <property type="entry name" value="AB_hydrolase_sf"/>
</dbReference>
<dbReference type="InterPro" id="IPR019913">
    <property type="entry name" value="Pyrimidine_utilisation_RutD"/>
</dbReference>
<dbReference type="NCBIfam" id="TIGR03611">
    <property type="entry name" value="RutD"/>
    <property type="match status" value="1"/>
</dbReference>
<dbReference type="PANTHER" id="PTHR43798">
    <property type="entry name" value="MONOACYLGLYCEROL LIPASE"/>
    <property type="match status" value="1"/>
</dbReference>
<dbReference type="Pfam" id="PF00561">
    <property type="entry name" value="Abhydrolase_1"/>
    <property type="match status" value="1"/>
</dbReference>
<dbReference type="SUPFAM" id="SSF53474">
    <property type="entry name" value="alpha/beta-Hydrolases"/>
    <property type="match status" value="1"/>
</dbReference>
<comment type="function">
    <text evidence="1">Involved in pyrimidine catabolism. May facilitate the hydrolysis of carbamate, a reaction that can also occur spontaneously.</text>
</comment>
<comment type="catalytic activity">
    <reaction evidence="1">
        <text>carbamate + 2 H(+) = NH4(+) + CO2</text>
        <dbReference type="Rhea" id="RHEA:15649"/>
        <dbReference type="ChEBI" id="CHEBI:13941"/>
        <dbReference type="ChEBI" id="CHEBI:15378"/>
        <dbReference type="ChEBI" id="CHEBI:16526"/>
        <dbReference type="ChEBI" id="CHEBI:28938"/>
    </reaction>
</comment>
<comment type="similarity">
    <text evidence="1">Belongs to the AB hydrolase superfamily. Hydrolase RutD family.</text>
</comment>
<organism>
    <name type="scientific">Escherichia coli O26:H11 (strain 11368 / EHEC)</name>
    <dbReference type="NCBI Taxonomy" id="573235"/>
    <lineage>
        <taxon>Bacteria</taxon>
        <taxon>Pseudomonadati</taxon>
        <taxon>Pseudomonadota</taxon>
        <taxon>Gammaproteobacteria</taxon>
        <taxon>Enterobacterales</taxon>
        <taxon>Enterobacteriaceae</taxon>
        <taxon>Escherichia</taxon>
    </lineage>
</organism>
<feature type="chain" id="PRO_0000402957" description="Putative carbamate hydrolase RutD">
    <location>
        <begin position="1"/>
        <end position="266"/>
    </location>
</feature>
<keyword id="KW-0378">Hydrolase</keyword>
<reference key="1">
    <citation type="journal article" date="2009" name="Proc. Natl. Acad. Sci. U.S.A.">
        <title>Comparative genomics reveal the mechanism of the parallel evolution of O157 and non-O157 enterohemorrhagic Escherichia coli.</title>
        <authorList>
            <person name="Ogura Y."/>
            <person name="Ooka T."/>
            <person name="Iguchi A."/>
            <person name="Toh H."/>
            <person name="Asadulghani M."/>
            <person name="Oshima K."/>
            <person name="Kodama T."/>
            <person name="Abe H."/>
            <person name="Nakayama K."/>
            <person name="Kurokawa K."/>
            <person name="Tobe T."/>
            <person name="Hattori M."/>
            <person name="Hayashi T."/>
        </authorList>
    </citation>
    <scope>NUCLEOTIDE SEQUENCE [LARGE SCALE GENOMIC DNA]</scope>
    <source>
        <strain>11368 / EHEC</strain>
    </source>
</reference>
<accession>C8TNB9</accession>
<gene>
    <name evidence="1" type="primary">rutD</name>
    <name type="synonym">rarA</name>
    <name type="ordered locus">ECO26_1247</name>
</gene>
<name>RUTD_ECO26</name>
<evidence type="ECO:0000255" key="1">
    <source>
        <dbReference type="HAMAP-Rule" id="MF_00832"/>
    </source>
</evidence>